<evidence type="ECO:0000255" key="1">
    <source>
        <dbReference type="HAMAP-Rule" id="MF_00158"/>
    </source>
</evidence>
<reference key="1">
    <citation type="submission" date="2005-08" db="EMBL/GenBank/DDBJ databases">
        <title>Complete sequence of Pelodictyon luteolum DSM 273.</title>
        <authorList>
            <consortium name="US DOE Joint Genome Institute"/>
            <person name="Copeland A."/>
            <person name="Lucas S."/>
            <person name="Lapidus A."/>
            <person name="Barry K."/>
            <person name="Detter J.C."/>
            <person name="Glavina T."/>
            <person name="Hammon N."/>
            <person name="Israni S."/>
            <person name="Pitluck S."/>
            <person name="Bryant D."/>
            <person name="Schmutz J."/>
            <person name="Larimer F."/>
            <person name="Land M."/>
            <person name="Kyrpides N."/>
            <person name="Ivanova N."/>
            <person name="Richardson P."/>
        </authorList>
    </citation>
    <scope>NUCLEOTIDE SEQUENCE [LARGE SCALE GENOMIC DNA]</scope>
    <source>
        <strain>DSM 273 / BCRC 81028 / 2530</strain>
    </source>
</reference>
<proteinExistence type="inferred from homology"/>
<dbReference type="EC" id="6.3.2.1" evidence="1"/>
<dbReference type="EMBL" id="CP000096">
    <property type="protein sequence ID" value="ABB24488.1"/>
    <property type="molecule type" value="Genomic_DNA"/>
</dbReference>
<dbReference type="RefSeq" id="WP_011358360.1">
    <property type="nucleotide sequence ID" value="NC_007512.1"/>
</dbReference>
<dbReference type="SMR" id="Q3B2E3"/>
<dbReference type="STRING" id="319225.Plut_1634"/>
<dbReference type="KEGG" id="plt:Plut_1634"/>
<dbReference type="eggNOG" id="COG0414">
    <property type="taxonomic scope" value="Bacteria"/>
</dbReference>
<dbReference type="HOGENOM" id="CLU_047148_0_0_10"/>
<dbReference type="OrthoDB" id="9773087at2"/>
<dbReference type="UniPathway" id="UPA00028">
    <property type="reaction ID" value="UER00005"/>
</dbReference>
<dbReference type="Proteomes" id="UP000002709">
    <property type="component" value="Chromosome"/>
</dbReference>
<dbReference type="GO" id="GO:0005829">
    <property type="term" value="C:cytosol"/>
    <property type="evidence" value="ECO:0007669"/>
    <property type="project" value="TreeGrafter"/>
</dbReference>
<dbReference type="GO" id="GO:0005524">
    <property type="term" value="F:ATP binding"/>
    <property type="evidence" value="ECO:0007669"/>
    <property type="project" value="UniProtKB-KW"/>
</dbReference>
<dbReference type="GO" id="GO:0004592">
    <property type="term" value="F:pantoate-beta-alanine ligase activity"/>
    <property type="evidence" value="ECO:0007669"/>
    <property type="project" value="UniProtKB-UniRule"/>
</dbReference>
<dbReference type="GO" id="GO:0015940">
    <property type="term" value="P:pantothenate biosynthetic process"/>
    <property type="evidence" value="ECO:0007669"/>
    <property type="project" value="UniProtKB-UniRule"/>
</dbReference>
<dbReference type="CDD" id="cd00560">
    <property type="entry name" value="PanC"/>
    <property type="match status" value="1"/>
</dbReference>
<dbReference type="Gene3D" id="3.40.50.620">
    <property type="entry name" value="HUPs"/>
    <property type="match status" value="1"/>
</dbReference>
<dbReference type="Gene3D" id="3.30.1300.10">
    <property type="entry name" value="Pantoate-beta-alanine ligase, C-terminal domain"/>
    <property type="match status" value="1"/>
</dbReference>
<dbReference type="HAMAP" id="MF_00158">
    <property type="entry name" value="PanC"/>
    <property type="match status" value="1"/>
</dbReference>
<dbReference type="InterPro" id="IPR003721">
    <property type="entry name" value="Pantoate_ligase"/>
</dbReference>
<dbReference type="InterPro" id="IPR042176">
    <property type="entry name" value="Pantoate_ligase_C"/>
</dbReference>
<dbReference type="InterPro" id="IPR014729">
    <property type="entry name" value="Rossmann-like_a/b/a_fold"/>
</dbReference>
<dbReference type="NCBIfam" id="TIGR00018">
    <property type="entry name" value="panC"/>
    <property type="match status" value="1"/>
</dbReference>
<dbReference type="PANTHER" id="PTHR21299">
    <property type="entry name" value="CYTIDYLATE KINASE/PANTOATE-BETA-ALANINE LIGASE"/>
    <property type="match status" value="1"/>
</dbReference>
<dbReference type="PANTHER" id="PTHR21299:SF1">
    <property type="entry name" value="PANTOATE--BETA-ALANINE LIGASE"/>
    <property type="match status" value="1"/>
</dbReference>
<dbReference type="Pfam" id="PF02569">
    <property type="entry name" value="Pantoate_ligase"/>
    <property type="match status" value="1"/>
</dbReference>
<dbReference type="SUPFAM" id="SSF52374">
    <property type="entry name" value="Nucleotidylyl transferase"/>
    <property type="match status" value="1"/>
</dbReference>
<comment type="function">
    <text evidence="1">Catalyzes the condensation of pantoate with beta-alanine in an ATP-dependent reaction via a pantoyl-adenylate intermediate.</text>
</comment>
<comment type="catalytic activity">
    <reaction evidence="1">
        <text>(R)-pantoate + beta-alanine + ATP = (R)-pantothenate + AMP + diphosphate + H(+)</text>
        <dbReference type="Rhea" id="RHEA:10912"/>
        <dbReference type="ChEBI" id="CHEBI:15378"/>
        <dbReference type="ChEBI" id="CHEBI:15980"/>
        <dbReference type="ChEBI" id="CHEBI:29032"/>
        <dbReference type="ChEBI" id="CHEBI:30616"/>
        <dbReference type="ChEBI" id="CHEBI:33019"/>
        <dbReference type="ChEBI" id="CHEBI:57966"/>
        <dbReference type="ChEBI" id="CHEBI:456215"/>
        <dbReference type="EC" id="6.3.2.1"/>
    </reaction>
</comment>
<comment type="pathway">
    <text evidence="1">Cofactor biosynthesis; (R)-pantothenate biosynthesis; (R)-pantothenate from (R)-pantoate and beta-alanine: step 1/1.</text>
</comment>
<comment type="subunit">
    <text evidence="1">Homodimer.</text>
</comment>
<comment type="subcellular location">
    <subcellularLocation>
        <location evidence="1">Cytoplasm</location>
    </subcellularLocation>
</comment>
<comment type="miscellaneous">
    <text evidence="1">The reaction proceeds by a bi uni uni bi ping pong mechanism.</text>
</comment>
<comment type="similarity">
    <text evidence="1">Belongs to the pantothenate synthetase family.</text>
</comment>
<keyword id="KW-0067">ATP-binding</keyword>
<keyword id="KW-0963">Cytoplasm</keyword>
<keyword id="KW-0436">Ligase</keyword>
<keyword id="KW-0547">Nucleotide-binding</keyword>
<keyword id="KW-0566">Pantothenate biosynthesis</keyword>
<keyword id="KW-1185">Reference proteome</keyword>
<sequence>MQIVTDPAEMQATADKLRAGRQLIGVVMTMGALHEGHLSLVNLAREHAGTIIMTLFVNPSQFGPGEDFQRYPRPFEKDAAMARSAGVDYLFAPTPEAMYPEGFQTTVSCSGITRRFEGERRPGHFDGVATIVSKLLNITRPHVAVFGEKDAQQLALIRRINRDLDMGVQIVAAPTVRENDGLAVSSRNIYLTGDERQKAPAIHRAIQHAGEMLAAGENDLKAVAAEVAGMITENTQFKLEYAAFVDEESFEPAETVVKEHEYRLLIAAAAERVRLIDNQKFRV</sequence>
<gene>
    <name evidence="1" type="primary">panC</name>
    <name type="ordered locus">Plut_1634</name>
</gene>
<protein>
    <recommendedName>
        <fullName evidence="1">Pantothenate synthetase</fullName>
        <shortName evidence="1">PS</shortName>
        <ecNumber evidence="1">6.3.2.1</ecNumber>
    </recommendedName>
    <alternativeName>
        <fullName evidence="1">Pantoate--beta-alanine ligase</fullName>
    </alternativeName>
    <alternativeName>
        <fullName evidence="1">Pantoate-activating enzyme</fullName>
    </alternativeName>
</protein>
<accession>Q3B2E3</accession>
<name>PANC_CHLL3</name>
<organism>
    <name type="scientific">Chlorobium luteolum (strain DSM 273 / BCRC 81028 / 2530)</name>
    <name type="common">Pelodictyon luteolum</name>
    <dbReference type="NCBI Taxonomy" id="319225"/>
    <lineage>
        <taxon>Bacteria</taxon>
        <taxon>Pseudomonadati</taxon>
        <taxon>Chlorobiota</taxon>
        <taxon>Chlorobiia</taxon>
        <taxon>Chlorobiales</taxon>
        <taxon>Chlorobiaceae</taxon>
        <taxon>Chlorobium/Pelodictyon group</taxon>
        <taxon>Pelodictyon</taxon>
    </lineage>
</organism>
<feature type="chain" id="PRO_0000305508" description="Pantothenate synthetase">
    <location>
        <begin position="1"/>
        <end position="283"/>
    </location>
</feature>
<feature type="active site" description="Proton donor" evidence="1">
    <location>
        <position position="37"/>
    </location>
</feature>
<feature type="binding site" evidence="1">
    <location>
        <begin position="30"/>
        <end position="37"/>
    </location>
    <ligand>
        <name>ATP</name>
        <dbReference type="ChEBI" id="CHEBI:30616"/>
    </ligand>
</feature>
<feature type="binding site" evidence="1">
    <location>
        <position position="61"/>
    </location>
    <ligand>
        <name>(R)-pantoate</name>
        <dbReference type="ChEBI" id="CHEBI:15980"/>
    </ligand>
</feature>
<feature type="binding site" evidence="1">
    <location>
        <position position="61"/>
    </location>
    <ligand>
        <name>beta-alanine</name>
        <dbReference type="ChEBI" id="CHEBI:57966"/>
    </ligand>
</feature>
<feature type="binding site" evidence="1">
    <location>
        <begin position="147"/>
        <end position="150"/>
    </location>
    <ligand>
        <name>ATP</name>
        <dbReference type="ChEBI" id="CHEBI:30616"/>
    </ligand>
</feature>
<feature type="binding site" evidence="1">
    <location>
        <position position="153"/>
    </location>
    <ligand>
        <name>(R)-pantoate</name>
        <dbReference type="ChEBI" id="CHEBI:15980"/>
    </ligand>
</feature>
<feature type="binding site" evidence="1">
    <location>
        <position position="176"/>
    </location>
    <ligand>
        <name>ATP</name>
        <dbReference type="ChEBI" id="CHEBI:30616"/>
    </ligand>
</feature>
<feature type="binding site" evidence="1">
    <location>
        <begin position="184"/>
        <end position="187"/>
    </location>
    <ligand>
        <name>ATP</name>
        <dbReference type="ChEBI" id="CHEBI:30616"/>
    </ligand>
</feature>